<comment type="function">
    <text>Potential calcium-dependent cell-adhesion protein. May be involved in the establishment and maintenance of specific neuronal connections in the brain.</text>
</comment>
<comment type="subcellular location">
    <subcellularLocation>
        <location evidence="1">Cell membrane</location>
        <topology evidence="1">Single-pass type I membrane protein</topology>
    </subcellularLocation>
</comment>
<keyword id="KW-0106">Calcium</keyword>
<keyword id="KW-0130">Cell adhesion</keyword>
<keyword id="KW-1003">Cell membrane</keyword>
<keyword id="KW-0325">Glycoprotein</keyword>
<keyword id="KW-0472">Membrane</keyword>
<keyword id="KW-1185">Reference proteome</keyword>
<keyword id="KW-0677">Repeat</keyword>
<keyword id="KW-0732">Signal</keyword>
<keyword id="KW-0812">Transmembrane</keyword>
<keyword id="KW-1133">Transmembrane helix</keyword>
<gene>
    <name type="primary">PCDHA10</name>
</gene>
<feature type="signal peptide" evidence="2">
    <location>
        <begin position="1"/>
        <end position="28"/>
    </location>
</feature>
<feature type="chain" id="PRO_0000003903" description="Protocadherin alpha-10">
    <location>
        <begin position="29"/>
        <end position="948"/>
    </location>
</feature>
<feature type="topological domain" description="Extracellular" evidence="2">
    <location>
        <begin position="29"/>
        <end position="695"/>
    </location>
</feature>
<feature type="transmembrane region" description="Helical" evidence="2">
    <location>
        <begin position="696"/>
        <end position="716"/>
    </location>
</feature>
<feature type="topological domain" description="Cytoplasmic" evidence="2">
    <location>
        <begin position="717"/>
        <end position="948"/>
    </location>
</feature>
<feature type="domain" description="Cadherin 1" evidence="3">
    <location>
        <begin position="29"/>
        <end position="132"/>
    </location>
</feature>
<feature type="domain" description="Cadherin 2" evidence="3">
    <location>
        <begin position="133"/>
        <end position="241"/>
    </location>
</feature>
<feature type="domain" description="Cadherin 3" evidence="3">
    <location>
        <begin position="242"/>
        <end position="349"/>
    </location>
</feature>
<feature type="domain" description="Cadherin 4" evidence="3">
    <location>
        <begin position="350"/>
        <end position="454"/>
    </location>
</feature>
<feature type="domain" description="Cadherin 5" evidence="3">
    <location>
        <begin position="455"/>
        <end position="564"/>
    </location>
</feature>
<feature type="domain" description="Cadherin 6" evidence="3">
    <location>
        <begin position="587"/>
        <end position="689"/>
    </location>
</feature>
<feature type="repeat" description="PXXP 1">
    <location>
        <begin position="732"/>
        <end position="735"/>
    </location>
</feature>
<feature type="repeat" description="PXXP 2">
    <location>
        <begin position="772"/>
        <end position="775"/>
    </location>
</feature>
<feature type="repeat" description="PXXP 3">
    <location>
        <begin position="797"/>
        <end position="800"/>
    </location>
</feature>
<feature type="repeat" description="PXXP 4">
    <location>
        <begin position="830"/>
        <end position="833"/>
    </location>
</feature>
<feature type="repeat" description="PXXP 5">
    <location>
        <begin position="871"/>
        <end position="874"/>
    </location>
</feature>
<feature type="repeat" description="PXXP 6">
    <location>
        <begin position="889"/>
        <end position="892"/>
    </location>
</feature>
<feature type="region of interest" description="6 X 4 AA repeats of P-X-X-P">
    <location>
        <begin position="732"/>
        <end position="892"/>
    </location>
</feature>
<feature type="region of interest" description="Disordered" evidence="4">
    <location>
        <begin position="783"/>
        <end position="804"/>
    </location>
</feature>
<feature type="region of interest" description="Disordered" evidence="4">
    <location>
        <begin position="827"/>
        <end position="948"/>
    </location>
</feature>
<feature type="compositionally biased region" description="Basic and acidic residues" evidence="4">
    <location>
        <begin position="907"/>
        <end position="921"/>
    </location>
</feature>
<feature type="glycosylation site" description="N-linked (GlcNAc...) asparagine" evidence="2">
    <location>
        <position position="256"/>
    </location>
</feature>
<feature type="glycosylation site" description="N-linked (GlcNAc...) asparagine" evidence="2">
    <location>
        <position position="264"/>
    </location>
</feature>
<feature type="glycosylation site" description="N-linked (GlcNAc...) asparagine" evidence="2">
    <location>
        <position position="547"/>
    </location>
</feature>
<accession>Q5DRF4</accession>
<reference key="1">
    <citation type="journal article" date="2005" name="Nature">
        <title>Initial sequence of the chimpanzee genome and comparison with the human genome.</title>
        <authorList>
            <consortium name="Chimpanzee sequencing and analysis consortium"/>
        </authorList>
    </citation>
    <scope>NUCLEOTIDE SEQUENCE [LARGE SCALE GENOMIC DNA]</scope>
</reference>
<reference key="2">
    <citation type="journal article" date="2005" name="Genetics">
        <title>Comparative genomics and diversifying selection of the clustered vertebrate protocadherin genes.</title>
        <authorList>
            <person name="Wu Q."/>
        </authorList>
    </citation>
    <scope>IDENTIFICATION</scope>
</reference>
<dbReference type="SMR" id="Q5DRF4"/>
<dbReference type="FunCoup" id="Q5DRF4">
    <property type="interactions" value="21"/>
</dbReference>
<dbReference type="GlyCosmos" id="Q5DRF4">
    <property type="glycosylation" value="3 sites, No reported glycans"/>
</dbReference>
<dbReference type="PaxDb" id="9598-ENSPTRP00000058232"/>
<dbReference type="eggNOG" id="KOG3594">
    <property type="taxonomic scope" value="Eukaryota"/>
</dbReference>
<dbReference type="InParanoid" id="Q5DRF4"/>
<dbReference type="Proteomes" id="UP000002277">
    <property type="component" value="Unplaced"/>
</dbReference>
<dbReference type="GO" id="GO:0005886">
    <property type="term" value="C:plasma membrane"/>
    <property type="evidence" value="ECO:0000318"/>
    <property type="project" value="GO_Central"/>
</dbReference>
<dbReference type="GO" id="GO:0005509">
    <property type="term" value="F:calcium ion binding"/>
    <property type="evidence" value="ECO:0007669"/>
    <property type="project" value="InterPro"/>
</dbReference>
<dbReference type="GO" id="GO:0007155">
    <property type="term" value="P:cell adhesion"/>
    <property type="evidence" value="ECO:0000318"/>
    <property type="project" value="GO_Central"/>
</dbReference>
<dbReference type="GO" id="GO:0007156">
    <property type="term" value="P:homophilic cell adhesion via plasma membrane adhesion molecules"/>
    <property type="evidence" value="ECO:0007669"/>
    <property type="project" value="InterPro"/>
</dbReference>
<dbReference type="GO" id="GO:0007399">
    <property type="term" value="P:nervous system development"/>
    <property type="evidence" value="ECO:0007669"/>
    <property type="project" value="UniProtKB-ARBA"/>
</dbReference>
<dbReference type="CDD" id="cd11304">
    <property type="entry name" value="Cadherin_repeat"/>
    <property type="match status" value="6"/>
</dbReference>
<dbReference type="FunFam" id="2.60.40.60:FF:000001">
    <property type="entry name" value="Protocadherin alpha 2"/>
    <property type="match status" value="1"/>
</dbReference>
<dbReference type="FunFam" id="2.60.40.60:FF:000002">
    <property type="entry name" value="Protocadherin alpha 2"/>
    <property type="match status" value="1"/>
</dbReference>
<dbReference type="FunFam" id="2.60.40.60:FF:000003">
    <property type="entry name" value="Protocadherin alpha 2"/>
    <property type="match status" value="1"/>
</dbReference>
<dbReference type="FunFam" id="2.60.40.60:FF:000006">
    <property type="entry name" value="Protocadherin alpha 2"/>
    <property type="match status" value="1"/>
</dbReference>
<dbReference type="FunFam" id="2.60.40.60:FF:000007">
    <property type="entry name" value="Protocadherin alpha 2"/>
    <property type="match status" value="1"/>
</dbReference>
<dbReference type="FunFam" id="2.60.40.60:FF:000076">
    <property type="entry name" value="Protocadherin alpha 2"/>
    <property type="match status" value="1"/>
</dbReference>
<dbReference type="Gene3D" id="2.60.40.60">
    <property type="entry name" value="Cadherins"/>
    <property type="match status" value="6"/>
</dbReference>
<dbReference type="InterPro" id="IPR002126">
    <property type="entry name" value="Cadherin-like_dom"/>
</dbReference>
<dbReference type="InterPro" id="IPR015919">
    <property type="entry name" value="Cadherin-like_sf"/>
</dbReference>
<dbReference type="InterPro" id="IPR031904">
    <property type="entry name" value="Cadherin_CBD"/>
</dbReference>
<dbReference type="InterPro" id="IPR020894">
    <property type="entry name" value="Cadherin_CS"/>
</dbReference>
<dbReference type="InterPro" id="IPR013164">
    <property type="entry name" value="Cadherin_N"/>
</dbReference>
<dbReference type="InterPro" id="IPR050174">
    <property type="entry name" value="Protocadherin/Cadherin-CA"/>
</dbReference>
<dbReference type="PANTHER" id="PTHR24028">
    <property type="entry name" value="CADHERIN-87A"/>
    <property type="match status" value="1"/>
</dbReference>
<dbReference type="PANTHER" id="PTHR24028:SF124">
    <property type="entry name" value="PROTOCADHERIN ALPHA-10"/>
    <property type="match status" value="1"/>
</dbReference>
<dbReference type="Pfam" id="PF00028">
    <property type="entry name" value="Cadherin"/>
    <property type="match status" value="4"/>
</dbReference>
<dbReference type="Pfam" id="PF08266">
    <property type="entry name" value="Cadherin_2"/>
    <property type="match status" value="1"/>
</dbReference>
<dbReference type="Pfam" id="PF15974">
    <property type="entry name" value="Cadherin_tail"/>
    <property type="match status" value="1"/>
</dbReference>
<dbReference type="PRINTS" id="PR00205">
    <property type="entry name" value="CADHERIN"/>
</dbReference>
<dbReference type="SMART" id="SM00112">
    <property type="entry name" value="CA"/>
    <property type="match status" value="6"/>
</dbReference>
<dbReference type="SUPFAM" id="SSF49313">
    <property type="entry name" value="Cadherin-like"/>
    <property type="match status" value="6"/>
</dbReference>
<dbReference type="PROSITE" id="PS00232">
    <property type="entry name" value="CADHERIN_1"/>
    <property type="match status" value="5"/>
</dbReference>
<dbReference type="PROSITE" id="PS50268">
    <property type="entry name" value="CADHERIN_2"/>
    <property type="match status" value="6"/>
</dbReference>
<protein>
    <recommendedName>
        <fullName>Protocadherin alpha-10</fullName>
        <shortName>PCDH-alpha-10</shortName>
    </recommendedName>
</protein>
<proteinExistence type="inferred from homology"/>
<evidence type="ECO:0000250" key="1"/>
<evidence type="ECO:0000255" key="2"/>
<evidence type="ECO:0000255" key="3">
    <source>
        <dbReference type="PROSITE-ProRule" id="PRU00043"/>
    </source>
</evidence>
<evidence type="ECO:0000256" key="4">
    <source>
        <dbReference type="SAM" id="MobiDB-lite"/>
    </source>
</evidence>
<sequence>MVSRCSCLGVQCLLLSLLLLAAWEVGSGQLHYSVYEEARHGTFVGRIAQDLGLELAELVPRLFRVASKRHGDLLEVNLQNGILFVNSRIDREELCGRSVECSIHLEVIVDRPLQVFHVDVEVKDINDNPPRFSVTEQKLSIPESRLLDSRFPLEGASDADVGENALLTYKLSPNEYFVLDIINKKDKDKFPVLVLRKLLDREENPQLKLLLTATDGGKPEFTGSVSLLILVLDANDNAPIFDRPVYEVKMYENQVNQTLVIRLNASDSDEGINKEMMYSFSSLVPPTIRRKFWINERTGEIKVNDAIDFEDSNTYQIHVDVTDKGNPPMVGHCTVLVELLDENDNSPEVIVTSLSLPVKEDAQVGTVIALISVSDHDSGANGQVTCSLTPHVPFKLVSTYKNYYSLVLDSALDRERVSAYELVVTARDGGSPPLWATASVSVEVADVNDNAPAFAQPEYTVFVKENNPPGYHIFTVSAWDADAQENALVSYSLVERRLGERSLSSYVSVHAQSGKVYALQPLDHEELELLQFQVSARDGGVPPLGSNLTLQVFVLDENDNAPALLASPAGSAGGAVSELVLRSVGAGHVVAKVRAVDADSGYNAWLSYELQSAAVGARIPFRVGLYTGEISTTRALDEADSPRQRLLVLVKDHGEPSLTATATVLVSLVEGSQAPKASSRASVGVAPEVALVDVNVYLIIAICAVSSLLVLTLLLYTALRCSAAPTEGACGPVKPTLVCSSTVGSWSYSQQRRQRVCSGEGLPKADLMAFSPSLPPCPMVDVDGEDQSIGGDHSRKPRQPNPDWRYSASLRAGMHSSVHLEEAGILRAGPGGPDQQWPTVSSATPEPEAGEVSPPVGAGVNSNSWTFKYGPGNPKQSGPGELPDKFIIPGSPAIISIRQEPANSQIDKSDFITFGKKEETKKKKKKKKGNKTQEKKEKGNSTTDNSDQ</sequence>
<organism>
    <name type="scientific">Pan troglodytes</name>
    <name type="common">Chimpanzee</name>
    <dbReference type="NCBI Taxonomy" id="9598"/>
    <lineage>
        <taxon>Eukaryota</taxon>
        <taxon>Metazoa</taxon>
        <taxon>Chordata</taxon>
        <taxon>Craniata</taxon>
        <taxon>Vertebrata</taxon>
        <taxon>Euteleostomi</taxon>
        <taxon>Mammalia</taxon>
        <taxon>Eutheria</taxon>
        <taxon>Euarchontoglires</taxon>
        <taxon>Primates</taxon>
        <taxon>Haplorrhini</taxon>
        <taxon>Catarrhini</taxon>
        <taxon>Hominidae</taxon>
        <taxon>Pan</taxon>
    </lineage>
</organism>
<name>PCDAA_PANTR</name>